<reference key="1">
    <citation type="journal article" date="2006" name="BMC Genomics">
        <title>The genome of the square archaeon Haloquadratum walsbyi: life at the limits of water activity.</title>
        <authorList>
            <person name="Bolhuis H."/>
            <person name="Palm P."/>
            <person name="Wende A."/>
            <person name="Falb M."/>
            <person name="Rampp M."/>
            <person name="Rodriguez-Valera F."/>
            <person name="Pfeiffer F."/>
            <person name="Oesterhelt D."/>
        </authorList>
    </citation>
    <scope>NUCLEOTIDE SEQUENCE [LARGE SCALE GENOMIC DNA]</scope>
    <source>
        <strain>DSM 16790 / HBSQ001</strain>
    </source>
</reference>
<comment type="function">
    <text evidence="1">Converts heme B (protoheme IX) to heme O by substitution of the vinyl group on carbon 2 of heme B porphyrin ring with a hydroxyethyl farnesyl side group.</text>
</comment>
<comment type="catalytic activity">
    <reaction>
        <text>heme b + (2E,6E)-farnesyl diphosphate + H2O = Fe(II)-heme o + diphosphate</text>
        <dbReference type="Rhea" id="RHEA:28070"/>
        <dbReference type="ChEBI" id="CHEBI:15377"/>
        <dbReference type="ChEBI" id="CHEBI:33019"/>
        <dbReference type="ChEBI" id="CHEBI:60344"/>
        <dbReference type="ChEBI" id="CHEBI:60530"/>
        <dbReference type="ChEBI" id="CHEBI:175763"/>
        <dbReference type="EC" id="2.5.1.141"/>
    </reaction>
</comment>
<comment type="pathway">
    <text>Porphyrin-containing compound metabolism; heme O biosynthesis; heme O from protoheme: step 1/1.</text>
</comment>
<comment type="subcellular location">
    <subcellularLocation>
        <location evidence="4">Cell membrane</location>
        <topology evidence="4">Multi-pass membrane protein</topology>
    </subcellularLocation>
</comment>
<comment type="miscellaneous">
    <text evidence="1">Carbon 2 of the heme B porphyrin ring is defined according to the Fischer nomenclature.</text>
</comment>
<comment type="similarity">
    <text evidence="4">In the C-terminal section; belongs to the UbiA prenyltransferase family. Protoheme IX farnesyltransferase subfamily.</text>
</comment>
<keyword id="KW-1003">Cell membrane</keyword>
<keyword id="KW-0350">Heme biosynthesis</keyword>
<keyword id="KW-0472">Membrane</keyword>
<keyword id="KW-1185">Reference proteome</keyword>
<keyword id="KW-0808">Transferase</keyword>
<keyword id="KW-0812">Transmembrane</keyword>
<keyword id="KW-1133">Transmembrane helix</keyword>
<accession>Q18JU9</accession>
<organism>
    <name type="scientific">Haloquadratum walsbyi (strain DSM 16790 / HBSQ001)</name>
    <dbReference type="NCBI Taxonomy" id="362976"/>
    <lineage>
        <taxon>Archaea</taxon>
        <taxon>Methanobacteriati</taxon>
        <taxon>Methanobacteriota</taxon>
        <taxon>Stenosarchaea group</taxon>
        <taxon>Halobacteria</taxon>
        <taxon>Halobacteriales</taxon>
        <taxon>Haloferacaceae</taxon>
        <taxon>Haloquadratum</taxon>
    </lineage>
</organism>
<dbReference type="EC" id="2.5.1.141"/>
<dbReference type="EMBL" id="AM180088">
    <property type="protein sequence ID" value="CAJ51705.1"/>
    <property type="molecule type" value="Genomic_DNA"/>
</dbReference>
<dbReference type="RefSeq" id="WP_011570857.1">
    <property type="nucleotide sequence ID" value="NC_008212.1"/>
</dbReference>
<dbReference type="SMR" id="Q18JU9"/>
<dbReference type="STRING" id="362976.HQ_1577A"/>
<dbReference type="GeneID" id="4193878"/>
<dbReference type="KEGG" id="hwa:HQ_1577A"/>
<dbReference type="eggNOG" id="arCOG00479">
    <property type="taxonomic scope" value="Archaea"/>
</dbReference>
<dbReference type="HOGENOM" id="CLU_030009_1_1_2"/>
<dbReference type="UniPathway" id="UPA00834">
    <property type="reaction ID" value="UER00712"/>
</dbReference>
<dbReference type="Proteomes" id="UP000001975">
    <property type="component" value="Chromosome"/>
</dbReference>
<dbReference type="GO" id="GO:0005886">
    <property type="term" value="C:plasma membrane"/>
    <property type="evidence" value="ECO:0007669"/>
    <property type="project" value="UniProtKB-SubCell"/>
</dbReference>
<dbReference type="GO" id="GO:0008495">
    <property type="term" value="F:protoheme IX farnesyltransferase activity"/>
    <property type="evidence" value="ECO:0007669"/>
    <property type="project" value="UniProtKB-UniRule"/>
</dbReference>
<dbReference type="GO" id="GO:0048034">
    <property type="term" value="P:heme O biosynthetic process"/>
    <property type="evidence" value="ECO:0007669"/>
    <property type="project" value="UniProtKB-UniRule"/>
</dbReference>
<dbReference type="CDD" id="cd13957">
    <property type="entry name" value="PT_UbiA_Cox10"/>
    <property type="match status" value="1"/>
</dbReference>
<dbReference type="Gene3D" id="1.10.357.140">
    <property type="entry name" value="UbiA prenyltransferase"/>
    <property type="match status" value="1"/>
</dbReference>
<dbReference type="HAMAP" id="MF_00154">
    <property type="entry name" value="CyoE_CtaB"/>
    <property type="match status" value="1"/>
</dbReference>
<dbReference type="InterPro" id="IPR006369">
    <property type="entry name" value="Protohaem_IX_farnesylTrfase"/>
</dbReference>
<dbReference type="InterPro" id="IPR000537">
    <property type="entry name" value="UbiA_prenyltransferase"/>
</dbReference>
<dbReference type="InterPro" id="IPR044878">
    <property type="entry name" value="UbiA_sf"/>
</dbReference>
<dbReference type="NCBIfam" id="TIGR01473">
    <property type="entry name" value="cyoE_ctaB"/>
    <property type="match status" value="1"/>
</dbReference>
<dbReference type="NCBIfam" id="NF003349">
    <property type="entry name" value="PRK04375.1-2"/>
    <property type="match status" value="1"/>
</dbReference>
<dbReference type="PANTHER" id="PTHR43448">
    <property type="entry name" value="PROTOHEME IX FARNESYLTRANSFERASE, MITOCHONDRIAL"/>
    <property type="match status" value="1"/>
</dbReference>
<dbReference type="PANTHER" id="PTHR43448:SF2">
    <property type="entry name" value="PROTOHEME IX FARNESYLTRANSFERASE, MITOCHONDRIAL"/>
    <property type="match status" value="1"/>
</dbReference>
<dbReference type="Pfam" id="PF01040">
    <property type="entry name" value="UbiA"/>
    <property type="match status" value="1"/>
</dbReference>
<gene>
    <name type="primary">ctaB</name>
    <name type="ordered locus">HQ_1577A</name>
</gene>
<protein>
    <recommendedName>
        <fullName>Protoheme IX farnesyltransferase</fullName>
        <ecNumber>2.5.1.141</ecNumber>
    </recommendedName>
    <alternativeName>
        <fullName>Heme B farnesyltransferase</fullName>
    </alternativeName>
    <alternativeName>
        <fullName>Heme O synthase</fullName>
    </alternativeName>
</protein>
<evidence type="ECO:0000250" key="1"/>
<evidence type="ECO:0000255" key="2"/>
<evidence type="ECO:0000256" key="3">
    <source>
        <dbReference type="SAM" id="MobiDB-lite"/>
    </source>
</evidence>
<evidence type="ECO:0000305" key="4"/>
<feature type="chain" id="PRO_0000327203" description="Protoheme IX farnesyltransferase">
    <location>
        <begin position="1"/>
        <end position="479"/>
    </location>
</feature>
<feature type="transmembrane region" description="Helical" evidence="2">
    <location>
        <begin position="20"/>
        <end position="40"/>
    </location>
</feature>
<feature type="transmembrane region" description="Helical" evidence="2">
    <location>
        <begin position="64"/>
        <end position="84"/>
    </location>
</feature>
<feature type="transmembrane region" description="Helical" evidence="2">
    <location>
        <begin position="98"/>
        <end position="118"/>
    </location>
</feature>
<feature type="transmembrane region" description="Helical" evidence="2">
    <location>
        <begin position="128"/>
        <end position="148"/>
    </location>
</feature>
<feature type="transmembrane region" description="Helical" evidence="2">
    <location>
        <begin position="207"/>
        <end position="227"/>
    </location>
</feature>
<feature type="transmembrane region" description="Helical" evidence="2">
    <location>
        <begin position="231"/>
        <end position="251"/>
    </location>
</feature>
<feature type="transmembrane region" description="Helical" evidence="2">
    <location>
        <begin position="271"/>
        <end position="291"/>
    </location>
</feature>
<feature type="transmembrane region" description="Helical" evidence="2">
    <location>
        <begin position="303"/>
        <end position="322"/>
    </location>
</feature>
<feature type="transmembrane region" description="Helical" evidence="2">
    <location>
        <begin position="324"/>
        <end position="344"/>
    </location>
</feature>
<feature type="transmembrane region" description="Helical" evidence="2">
    <location>
        <begin position="345"/>
        <end position="365"/>
    </location>
</feature>
<feature type="transmembrane region" description="Helical" evidence="2">
    <location>
        <begin position="402"/>
        <end position="422"/>
    </location>
</feature>
<feature type="transmembrane region" description="Helical" evidence="2">
    <location>
        <begin position="423"/>
        <end position="443"/>
    </location>
</feature>
<feature type="transmembrane region" description="Helical" evidence="2">
    <location>
        <begin position="459"/>
        <end position="479"/>
    </location>
</feature>
<feature type="region of interest" description="Unknown">
    <location>
        <begin position="1"/>
        <end position="207"/>
    </location>
</feature>
<feature type="region of interest" description="Disordered" evidence="3">
    <location>
        <begin position="155"/>
        <end position="186"/>
    </location>
</feature>
<feature type="region of interest" description="Protoheme IX prenyltransferase">
    <location>
        <begin position="208"/>
        <end position="476"/>
    </location>
</feature>
<feature type="compositionally biased region" description="Low complexity" evidence="3">
    <location>
        <begin position="155"/>
        <end position="164"/>
    </location>
</feature>
<name>COXX_HALWD</name>
<sequence length="479" mass="50506">MAEQTATTTSAIDIRRFHGLLAGTAMGVYLLVLVGVTTAVTDAAAACAAWPICGNGWATPGSAIGWLAVGHRVVAVIIGICAVVTLGVGIREHIERRVLITVAVGSFLYPIQAAVGAVVAVQGPDLTLSVIHLIGGLSIFLTLAIALAWSLETETGDPTETQTTPSKPEPDQDLPPASEYDPDLPADPRDRLLATLRAYIRLTKPRLMWLLCLVASAGMTLGATTTGQLTPGIALATLGGGVLSIGASGTFNHVLERDVDRRMQRTSDRPLATDLVPVWNAIAFGILLTVISIVLFSWVNMLAAILGGVAIVFYSVVYTLLLKPNTVQNTVIGGAAGALPALIGWVAVTGDIGFGGLALATVIFLWTPAHFYNLALAYKEDYERGGFPMMPVVRGETETRKHVIWWLALTLVAAGGLATIEALGIVYAVASIVFGAVFLYFAIKLHYEQTKAAAFHSFHASNAYLGAVLIAIVFDTLVI</sequence>
<proteinExistence type="inferred from homology"/>